<dbReference type="EC" id="3.1.21.10" evidence="1"/>
<dbReference type="EMBL" id="AL157959">
    <property type="protein sequence ID" value="CAM08767.1"/>
    <property type="status" value="ALT_INIT"/>
    <property type="molecule type" value="Genomic_DNA"/>
</dbReference>
<dbReference type="RefSeq" id="WP_002245102.1">
    <property type="nucleotide sequence ID" value="NC_003116.1"/>
</dbReference>
<dbReference type="SMR" id="Q9JTU3"/>
<dbReference type="EnsemblBacteria" id="CAM08767">
    <property type="protein sequence ID" value="CAM08767"/>
    <property type="gene ID" value="NMA1631"/>
</dbReference>
<dbReference type="GeneID" id="93387953"/>
<dbReference type="KEGG" id="nma:NMA1631"/>
<dbReference type="HOGENOM" id="CLU_091257_2_0_4"/>
<dbReference type="Proteomes" id="UP000000626">
    <property type="component" value="Chromosome"/>
</dbReference>
<dbReference type="GO" id="GO:0005737">
    <property type="term" value="C:cytoplasm"/>
    <property type="evidence" value="ECO:0007669"/>
    <property type="project" value="UniProtKB-SubCell"/>
</dbReference>
<dbReference type="GO" id="GO:0048476">
    <property type="term" value="C:Holliday junction resolvase complex"/>
    <property type="evidence" value="ECO:0007669"/>
    <property type="project" value="UniProtKB-UniRule"/>
</dbReference>
<dbReference type="GO" id="GO:0008821">
    <property type="term" value="F:crossover junction DNA endonuclease activity"/>
    <property type="evidence" value="ECO:0007669"/>
    <property type="project" value="UniProtKB-UniRule"/>
</dbReference>
<dbReference type="GO" id="GO:0003677">
    <property type="term" value="F:DNA binding"/>
    <property type="evidence" value="ECO:0007669"/>
    <property type="project" value="UniProtKB-KW"/>
</dbReference>
<dbReference type="GO" id="GO:0000287">
    <property type="term" value="F:magnesium ion binding"/>
    <property type="evidence" value="ECO:0007669"/>
    <property type="project" value="UniProtKB-UniRule"/>
</dbReference>
<dbReference type="GO" id="GO:0006310">
    <property type="term" value="P:DNA recombination"/>
    <property type="evidence" value="ECO:0007669"/>
    <property type="project" value="UniProtKB-UniRule"/>
</dbReference>
<dbReference type="GO" id="GO:0006281">
    <property type="term" value="P:DNA repair"/>
    <property type="evidence" value="ECO:0007669"/>
    <property type="project" value="UniProtKB-UniRule"/>
</dbReference>
<dbReference type="CDD" id="cd16962">
    <property type="entry name" value="RuvC"/>
    <property type="match status" value="1"/>
</dbReference>
<dbReference type="FunFam" id="3.30.420.10:FF:000002">
    <property type="entry name" value="Crossover junction endodeoxyribonuclease RuvC"/>
    <property type="match status" value="1"/>
</dbReference>
<dbReference type="Gene3D" id="3.30.420.10">
    <property type="entry name" value="Ribonuclease H-like superfamily/Ribonuclease H"/>
    <property type="match status" value="1"/>
</dbReference>
<dbReference type="HAMAP" id="MF_00034">
    <property type="entry name" value="RuvC"/>
    <property type="match status" value="1"/>
</dbReference>
<dbReference type="InterPro" id="IPR012337">
    <property type="entry name" value="RNaseH-like_sf"/>
</dbReference>
<dbReference type="InterPro" id="IPR036397">
    <property type="entry name" value="RNaseH_sf"/>
</dbReference>
<dbReference type="InterPro" id="IPR020563">
    <property type="entry name" value="X-over_junc_endoDNase_Mg_BS"/>
</dbReference>
<dbReference type="InterPro" id="IPR002176">
    <property type="entry name" value="X-over_junc_endoDNase_RuvC"/>
</dbReference>
<dbReference type="NCBIfam" id="TIGR00228">
    <property type="entry name" value="ruvC"/>
    <property type="match status" value="1"/>
</dbReference>
<dbReference type="PANTHER" id="PTHR30194">
    <property type="entry name" value="CROSSOVER JUNCTION ENDODEOXYRIBONUCLEASE RUVC"/>
    <property type="match status" value="1"/>
</dbReference>
<dbReference type="PANTHER" id="PTHR30194:SF3">
    <property type="entry name" value="CROSSOVER JUNCTION ENDODEOXYRIBONUCLEASE RUVC"/>
    <property type="match status" value="1"/>
</dbReference>
<dbReference type="Pfam" id="PF02075">
    <property type="entry name" value="RuvC"/>
    <property type="match status" value="1"/>
</dbReference>
<dbReference type="PRINTS" id="PR00696">
    <property type="entry name" value="RSOLVASERUVC"/>
</dbReference>
<dbReference type="SUPFAM" id="SSF53098">
    <property type="entry name" value="Ribonuclease H-like"/>
    <property type="match status" value="1"/>
</dbReference>
<dbReference type="PROSITE" id="PS01321">
    <property type="entry name" value="RUVC"/>
    <property type="match status" value="1"/>
</dbReference>
<name>RUVC_NEIMA</name>
<accession>Q9JTU3</accession>
<accession>A1ISK8</accession>
<protein>
    <recommendedName>
        <fullName evidence="1">Crossover junction endodeoxyribonuclease RuvC</fullName>
        <ecNumber evidence="1">3.1.21.10</ecNumber>
    </recommendedName>
    <alternativeName>
        <fullName evidence="1">Holliday junction nuclease RuvC</fullName>
    </alternativeName>
    <alternativeName>
        <fullName evidence="1">Holliday junction resolvase RuvC</fullName>
    </alternativeName>
</protein>
<organism>
    <name type="scientific">Neisseria meningitidis serogroup A / serotype 4A (strain DSM 15465 / Z2491)</name>
    <dbReference type="NCBI Taxonomy" id="122587"/>
    <lineage>
        <taxon>Bacteria</taxon>
        <taxon>Pseudomonadati</taxon>
        <taxon>Pseudomonadota</taxon>
        <taxon>Betaproteobacteria</taxon>
        <taxon>Neisseriales</taxon>
        <taxon>Neisseriaceae</taxon>
        <taxon>Neisseria</taxon>
    </lineage>
</organism>
<evidence type="ECO:0000255" key="1">
    <source>
        <dbReference type="HAMAP-Rule" id="MF_00034"/>
    </source>
</evidence>
<evidence type="ECO:0000305" key="2"/>
<gene>
    <name evidence="1" type="primary">ruvC</name>
    <name type="ordered locus">NMA1631</name>
</gene>
<keyword id="KW-0963">Cytoplasm</keyword>
<keyword id="KW-0227">DNA damage</keyword>
<keyword id="KW-0233">DNA recombination</keyword>
<keyword id="KW-0234">DNA repair</keyword>
<keyword id="KW-0238">DNA-binding</keyword>
<keyword id="KW-0255">Endonuclease</keyword>
<keyword id="KW-0378">Hydrolase</keyword>
<keyword id="KW-0460">Magnesium</keyword>
<keyword id="KW-0479">Metal-binding</keyword>
<keyword id="KW-0540">Nuclease</keyword>
<feature type="chain" id="PRO_0000183112" description="Crossover junction endodeoxyribonuclease RuvC">
    <location>
        <begin position="1"/>
        <end position="178"/>
    </location>
</feature>
<feature type="active site" evidence="1">
    <location>
        <position position="11"/>
    </location>
</feature>
<feature type="active site" evidence="1">
    <location>
        <position position="71"/>
    </location>
</feature>
<feature type="active site" evidence="1">
    <location>
        <position position="143"/>
    </location>
</feature>
<feature type="binding site" evidence="1">
    <location>
        <position position="11"/>
    </location>
    <ligand>
        <name>Mg(2+)</name>
        <dbReference type="ChEBI" id="CHEBI:18420"/>
        <label>1</label>
    </ligand>
</feature>
<feature type="binding site" evidence="1">
    <location>
        <position position="71"/>
    </location>
    <ligand>
        <name>Mg(2+)</name>
        <dbReference type="ChEBI" id="CHEBI:18420"/>
        <label>2</label>
    </ligand>
</feature>
<feature type="binding site" evidence="1">
    <location>
        <position position="143"/>
    </location>
    <ligand>
        <name>Mg(2+)</name>
        <dbReference type="ChEBI" id="CHEBI:18420"/>
        <label>1</label>
    </ligand>
</feature>
<sequence>MSATVRILGIDPGSRVTGFGVIDVRGRDHFYVASGCIKTPADAPLADRIAVIVRHIGEVVTVYKPQQAAVEQVFVNVNPASTLMLGQARGAALAALVSHKLPVSEYTALQVKQAVVGKGKAAKEQVQHMVVQMLGLSGTPQPDAADGLAVALTHALRNHGLAAKLNPSGMQVKRGRFQ</sequence>
<reference key="1">
    <citation type="journal article" date="2000" name="Nature">
        <title>Complete DNA sequence of a serogroup A strain of Neisseria meningitidis Z2491.</title>
        <authorList>
            <person name="Parkhill J."/>
            <person name="Achtman M."/>
            <person name="James K.D."/>
            <person name="Bentley S.D."/>
            <person name="Churcher C.M."/>
            <person name="Klee S.R."/>
            <person name="Morelli G."/>
            <person name="Basham D."/>
            <person name="Brown D."/>
            <person name="Chillingworth T."/>
            <person name="Davies R.M."/>
            <person name="Davis P."/>
            <person name="Devlin K."/>
            <person name="Feltwell T."/>
            <person name="Hamlin N."/>
            <person name="Holroyd S."/>
            <person name="Jagels K."/>
            <person name="Leather S."/>
            <person name="Moule S."/>
            <person name="Mungall K.L."/>
            <person name="Quail M.A."/>
            <person name="Rajandream M.A."/>
            <person name="Rutherford K.M."/>
            <person name="Simmonds M."/>
            <person name="Skelton J."/>
            <person name="Whitehead S."/>
            <person name="Spratt B.G."/>
            <person name="Barrell B.G."/>
        </authorList>
    </citation>
    <scope>NUCLEOTIDE SEQUENCE [LARGE SCALE GENOMIC DNA]</scope>
    <source>
        <strain>DSM 15465 / Z2491</strain>
    </source>
</reference>
<proteinExistence type="inferred from homology"/>
<comment type="function">
    <text evidence="1">The RuvA-RuvB-RuvC complex processes Holliday junction (HJ) DNA during genetic recombination and DNA repair. Endonuclease that resolves HJ intermediates. Cleaves cruciform DNA by making single-stranded nicks across the HJ at symmetrical positions within the homologous arms, yielding a 5'-phosphate and a 3'-hydroxyl group; requires a central core of homology in the junction. The consensus cleavage sequence is 5'-(A/T)TT(C/G)-3'. Cleavage occurs on the 3'-side of the TT dinucleotide at the point of strand exchange. HJ branch migration catalyzed by RuvA-RuvB allows RuvC to scan DNA until it finds its consensus sequence, where it cleaves and resolves the cruciform DNA.</text>
</comment>
<comment type="catalytic activity">
    <reaction evidence="1">
        <text>Endonucleolytic cleavage at a junction such as a reciprocal single-stranded crossover between two homologous DNA duplexes (Holliday junction).</text>
        <dbReference type="EC" id="3.1.21.10"/>
    </reaction>
</comment>
<comment type="cofactor">
    <cofactor evidence="1">
        <name>Mg(2+)</name>
        <dbReference type="ChEBI" id="CHEBI:18420"/>
    </cofactor>
    <text evidence="1">Binds 2 Mg(2+) ion per subunit.</text>
</comment>
<comment type="subunit">
    <text evidence="1">Homodimer which binds Holliday junction (HJ) DNA. The HJ becomes 2-fold symmetrical on binding to RuvC with unstacked arms; it has a different conformation from HJ DNA in complex with RuvA. In the full resolvosome a probable DNA-RuvA(4)-RuvB(12)-RuvC(2) complex forms which resolves the HJ.</text>
</comment>
<comment type="subcellular location">
    <subcellularLocation>
        <location evidence="1">Cytoplasm</location>
    </subcellularLocation>
</comment>
<comment type="similarity">
    <text evidence="1 2">Belongs to the RuvC family.</text>
</comment>
<comment type="sequence caution" evidence="2">
    <conflict type="erroneous initiation">
        <sequence resource="EMBL-CDS" id="CAM08767"/>
    </conflict>
    <text>Extended N-terminus.</text>
</comment>